<evidence type="ECO:0000255" key="1">
    <source>
        <dbReference type="PROSITE-ProRule" id="PRU01245"/>
    </source>
</evidence>
<evidence type="ECO:0000305" key="2"/>
<comment type="similarity">
    <text evidence="1 2">Belongs to the annexin family.</text>
</comment>
<name>ANX10_MOUSE</name>
<reference key="1">
    <citation type="journal article" date="1999" name="Genomics">
        <title>Novel human and mouse annexin A10 are linked to the genome duplications during early chordate evolution.</title>
        <authorList>
            <person name="Morgan R.O."/>
            <person name="Jenkins N.A."/>
            <person name="Gilbert D.J."/>
            <person name="Copeland N.G."/>
            <person name="Balsara B.R."/>
            <person name="Testa J.R."/>
            <person name="Fernandez M.-P."/>
        </authorList>
    </citation>
    <scope>NUCLEOTIDE SEQUENCE [MRNA]</scope>
</reference>
<reference key="2">
    <citation type="journal article" date="2005" name="Science">
        <title>The transcriptional landscape of the mammalian genome.</title>
        <authorList>
            <person name="Carninci P."/>
            <person name="Kasukawa T."/>
            <person name="Katayama S."/>
            <person name="Gough J."/>
            <person name="Frith M.C."/>
            <person name="Maeda N."/>
            <person name="Oyama R."/>
            <person name="Ravasi T."/>
            <person name="Lenhard B."/>
            <person name="Wells C."/>
            <person name="Kodzius R."/>
            <person name="Shimokawa K."/>
            <person name="Bajic V.B."/>
            <person name="Brenner S.E."/>
            <person name="Batalov S."/>
            <person name="Forrest A.R."/>
            <person name="Zavolan M."/>
            <person name="Davis M.J."/>
            <person name="Wilming L.G."/>
            <person name="Aidinis V."/>
            <person name="Allen J.E."/>
            <person name="Ambesi-Impiombato A."/>
            <person name="Apweiler R."/>
            <person name="Aturaliya R.N."/>
            <person name="Bailey T.L."/>
            <person name="Bansal M."/>
            <person name="Baxter L."/>
            <person name="Beisel K.W."/>
            <person name="Bersano T."/>
            <person name="Bono H."/>
            <person name="Chalk A.M."/>
            <person name="Chiu K.P."/>
            <person name="Choudhary V."/>
            <person name="Christoffels A."/>
            <person name="Clutterbuck D.R."/>
            <person name="Crowe M.L."/>
            <person name="Dalla E."/>
            <person name="Dalrymple B.P."/>
            <person name="de Bono B."/>
            <person name="Della Gatta G."/>
            <person name="di Bernardo D."/>
            <person name="Down T."/>
            <person name="Engstrom P."/>
            <person name="Fagiolini M."/>
            <person name="Faulkner G."/>
            <person name="Fletcher C.F."/>
            <person name="Fukushima T."/>
            <person name="Furuno M."/>
            <person name="Futaki S."/>
            <person name="Gariboldi M."/>
            <person name="Georgii-Hemming P."/>
            <person name="Gingeras T.R."/>
            <person name="Gojobori T."/>
            <person name="Green R.E."/>
            <person name="Gustincich S."/>
            <person name="Harbers M."/>
            <person name="Hayashi Y."/>
            <person name="Hensch T.K."/>
            <person name="Hirokawa N."/>
            <person name="Hill D."/>
            <person name="Huminiecki L."/>
            <person name="Iacono M."/>
            <person name="Ikeo K."/>
            <person name="Iwama A."/>
            <person name="Ishikawa T."/>
            <person name="Jakt M."/>
            <person name="Kanapin A."/>
            <person name="Katoh M."/>
            <person name="Kawasawa Y."/>
            <person name="Kelso J."/>
            <person name="Kitamura H."/>
            <person name="Kitano H."/>
            <person name="Kollias G."/>
            <person name="Krishnan S.P."/>
            <person name="Kruger A."/>
            <person name="Kummerfeld S.K."/>
            <person name="Kurochkin I.V."/>
            <person name="Lareau L.F."/>
            <person name="Lazarevic D."/>
            <person name="Lipovich L."/>
            <person name="Liu J."/>
            <person name="Liuni S."/>
            <person name="McWilliam S."/>
            <person name="Madan Babu M."/>
            <person name="Madera M."/>
            <person name="Marchionni L."/>
            <person name="Matsuda H."/>
            <person name="Matsuzawa S."/>
            <person name="Miki H."/>
            <person name="Mignone F."/>
            <person name="Miyake S."/>
            <person name="Morris K."/>
            <person name="Mottagui-Tabar S."/>
            <person name="Mulder N."/>
            <person name="Nakano N."/>
            <person name="Nakauchi H."/>
            <person name="Ng P."/>
            <person name="Nilsson R."/>
            <person name="Nishiguchi S."/>
            <person name="Nishikawa S."/>
            <person name="Nori F."/>
            <person name="Ohara O."/>
            <person name="Okazaki Y."/>
            <person name="Orlando V."/>
            <person name="Pang K.C."/>
            <person name="Pavan W.J."/>
            <person name="Pavesi G."/>
            <person name="Pesole G."/>
            <person name="Petrovsky N."/>
            <person name="Piazza S."/>
            <person name="Reed J."/>
            <person name="Reid J.F."/>
            <person name="Ring B.Z."/>
            <person name="Ringwald M."/>
            <person name="Rost B."/>
            <person name="Ruan Y."/>
            <person name="Salzberg S.L."/>
            <person name="Sandelin A."/>
            <person name="Schneider C."/>
            <person name="Schoenbach C."/>
            <person name="Sekiguchi K."/>
            <person name="Semple C.A."/>
            <person name="Seno S."/>
            <person name="Sessa L."/>
            <person name="Sheng Y."/>
            <person name="Shibata Y."/>
            <person name="Shimada H."/>
            <person name="Shimada K."/>
            <person name="Silva D."/>
            <person name="Sinclair B."/>
            <person name="Sperling S."/>
            <person name="Stupka E."/>
            <person name="Sugiura K."/>
            <person name="Sultana R."/>
            <person name="Takenaka Y."/>
            <person name="Taki K."/>
            <person name="Tammoja K."/>
            <person name="Tan S.L."/>
            <person name="Tang S."/>
            <person name="Taylor M.S."/>
            <person name="Tegner J."/>
            <person name="Teichmann S.A."/>
            <person name="Ueda H.R."/>
            <person name="van Nimwegen E."/>
            <person name="Verardo R."/>
            <person name="Wei C.L."/>
            <person name="Yagi K."/>
            <person name="Yamanishi H."/>
            <person name="Zabarovsky E."/>
            <person name="Zhu S."/>
            <person name="Zimmer A."/>
            <person name="Hide W."/>
            <person name="Bult C."/>
            <person name="Grimmond S.M."/>
            <person name="Teasdale R.D."/>
            <person name="Liu E.T."/>
            <person name="Brusic V."/>
            <person name="Quackenbush J."/>
            <person name="Wahlestedt C."/>
            <person name="Mattick J.S."/>
            <person name="Hume D.A."/>
            <person name="Kai C."/>
            <person name="Sasaki D."/>
            <person name="Tomaru Y."/>
            <person name="Fukuda S."/>
            <person name="Kanamori-Katayama M."/>
            <person name="Suzuki M."/>
            <person name="Aoki J."/>
            <person name="Arakawa T."/>
            <person name="Iida J."/>
            <person name="Imamura K."/>
            <person name="Itoh M."/>
            <person name="Kato T."/>
            <person name="Kawaji H."/>
            <person name="Kawagashira N."/>
            <person name="Kawashima T."/>
            <person name="Kojima M."/>
            <person name="Kondo S."/>
            <person name="Konno H."/>
            <person name="Nakano K."/>
            <person name="Ninomiya N."/>
            <person name="Nishio T."/>
            <person name="Okada M."/>
            <person name="Plessy C."/>
            <person name="Shibata K."/>
            <person name="Shiraki T."/>
            <person name="Suzuki S."/>
            <person name="Tagami M."/>
            <person name="Waki K."/>
            <person name="Watahiki A."/>
            <person name="Okamura-Oho Y."/>
            <person name="Suzuki H."/>
            <person name="Kawai J."/>
            <person name="Hayashizaki Y."/>
        </authorList>
    </citation>
    <scope>NUCLEOTIDE SEQUENCE [LARGE SCALE MRNA]</scope>
    <source>
        <strain>C57BL/6J</strain>
        <tissue>Stomach</tissue>
    </source>
</reference>
<reference key="3">
    <citation type="submission" date="2005-07" db="EMBL/GenBank/DDBJ databases">
        <authorList>
            <person name="Mural R.J."/>
            <person name="Adams M.D."/>
            <person name="Myers E.W."/>
            <person name="Smith H.O."/>
            <person name="Venter J.C."/>
        </authorList>
    </citation>
    <scope>NUCLEOTIDE SEQUENCE [LARGE SCALE GENOMIC DNA]</scope>
</reference>
<reference key="4">
    <citation type="journal article" date="2004" name="Genome Res.">
        <title>The status, quality, and expansion of the NIH full-length cDNA project: the Mammalian Gene Collection (MGC).</title>
        <authorList>
            <consortium name="The MGC Project Team"/>
        </authorList>
    </citation>
    <scope>NUCLEOTIDE SEQUENCE [LARGE SCALE MRNA]</scope>
    <source>
        <tissue>Brain</tissue>
    </source>
</reference>
<proteinExistence type="evidence at transcript level"/>
<sequence>MFCGEYVQGTIFPAPNFNPMMDAQMLGGALQGFDCNKDMLIDILTQRSNAQRQMIAGTYQSMYGRDLISVLKEQLSSHFKEVMVGLMYPPPSYDAHELWHAMKGPGTDENCLIEILASRTNGEIFQMREAYCLQYSNNLQEDIYSETSGHFRDTLMNLVQANREEGYSDPAMAAQDAMVLWEACQQKTGEHKTMMQMILCNKSYPQLWLVFQEFQNISGQDLVDAINDCYDGYFQELLVAIVRCIQDKPSYFAYKLYRAIHDFGFHNKTVIRILIARSEIDLMTIRKRYKERFGKSLFHDIKNFASGHYEKALLAICAGDVEDY</sequence>
<gene>
    <name type="primary">Anxa10</name>
</gene>
<protein>
    <recommendedName>
        <fullName>Annexin A10</fullName>
    </recommendedName>
    <alternativeName>
        <fullName>Annexin-10</fullName>
    </alternativeName>
</protein>
<dbReference type="EMBL" id="AJ238978">
    <property type="protein sequence ID" value="CAB51927.1"/>
    <property type="molecule type" value="mRNA"/>
</dbReference>
<dbReference type="EMBL" id="AK168715">
    <property type="protein sequence ID" value="BAE40557.1"/>
    <property type="molecule type" value="mRNA"/>
</dbReference>
<dbReference type="EMBL" id="CH466569">
    <property type="protein sequence ID" value="EDL28663.1"/>
    <property type="molecule type" value="Genomic_DNA"/>
</dbReference>
<dbReference type="EMBL" id="BC125319">
    <property type="protein sequence ID" value="AAI25320.1"/>
    <property type="molecule type" value="mRNA"/>
</dbReference>
<dbReference type="EMBL" id="BC132207">
    <property type="protein sequence ID" value="AAI32208.1"/>
    <property type="molecule type" value="mRNA"/>
</dbReference>
<dbReference type="CCDS" id="CCDS52558.1"/>
<dbReference type="RefSeq" id="NP_001129561.1">
    <property type="nucleotide sequence ID" value="NM_001136089.2"/>
</dbReference>
<dbReference type="SMR" id="Q9QZ10"/>
<dbReference type="FunCoup" id="Q9QZ10">
    <property type="interactions" value="249"/>
</dbReference>
<dbReference type="STRING" id="10090.ENSMUSP00000034052"/>
<dbReference type="PhosphoSitePlus" id="Q9QZ10"/>
<dbReference type="jPOST" id="Q9QZ10"/>
<dbReference type="PaxDb" id="10090-ENSMUSP00000034052"/>
<dbReference type="ProteomicsDB" id="281774"/>
<dbReference type="Antibodypedia" id="1612">
    <property type="antibodies" value="470 antibodies from 37 providers"/>
</dbReference>
<dbReference type="DNASU" id="26359"/>
<dbReference type="Ensembl" id="ENSMUST00000034052.14">
    <property type="protein sequence ID" value="ENSMUSP00000034052.7"/>
    <property type="gene ID" value="ENSMUSG00000031635.15"/>
</dbReference>
<dbReference type="GeneID" id="26359"/>
<dbReference type="KEGG" id="mmu:26359"/>
<dbReference type="UCSC" id="uc009lup.2">
    <property type="organism name" value="mouse"/>
</dbReference>
<dbReference type="AGR" id="MGI:1347090"/>
<dbReference type="CTD" id="11199"/>
<dbReference type="MGI" id="MGI:1347090">
    <property type="gene designation" value="Anxa10"/>
</dbReference>
<dbReference type="VEuPathDB" id="HostDB:ENSMUSG00000031635"/>
<dbReference type="eggNOG" id="KOG0819">
    <property type="taxonomic scope" value="Eukaryota"/>
</dbReference>
<dbReference type="GeneTree" id="ENSGT00940000160623"/>
<dbReference type="HOGENOM" id="CLU_025300_0_0_1"/>
<dbReference type="InParanoid" id="Q9QZ10"/>
<dbReference type="OMA" id="KEIHDSW"/>
<dbReference type="OrthoDB" id="37886at2759"/>
<dbReference type="PhylomeDB" id="Q9QZ10"/>
<dbReference type="TreeFam" id="TF105452"/>
<dbReference type="BioGRID-ORCS" id="26359">
    <property type="hits" value="3 hits in 78 CRISPR screens"/>
</dbReference>
<dbReference type="PRO" id="PR:Q9QZ10"/>
<dbReference type="Proteomes" id="UP000000589">
    <property type="component" value="Chromosome 8"/>
</dbReference>
<dbReference type="RNAct" id="Q9QZ10">
    <property type="molecule type" value="protein"/>
</dbReference>
<dbReference type="Bgee" id="ENSMUSG00000031635">
    <property type="expression patterns" value="Expressed in mucosa of stomach and 25 other cell types or tissues"/>
</dbReference>
<dbReference type="ExpressionAtlas" id="Q9QZ10">
    <property type="expression patterns" value="baseline and differential"/>
</dbReference>
<dbReference type="GO" id="GO:0005739">
    <property type="term" value="C:mitochondrion"/>
    <property type="evidence" value="ECO:0007005"/>
    <property type="project" value="MGI"/>
</dbReference>
<dbReference type="GO" id="GO:0005509">
    <property type="term" value="F:calcium ion binding"/>
    <property type="evidence" value="ECO:0007669"/>
    <property type="project" value="InterPro"/>
</dbReference>
<dbReference type="GO" id="GO:0005544">
    <property type="term" value="F:calcium-dependent phospholipid binding"/>
    <property type="evidence" value="ECO:0007669"/>
    <property type="project" value="InterPro"/>
</dbReference>
<dbReference type="FunFam" id="1.10.220.10:FF:000001">
    <property type="entry name" value="Annexin"/>
    <property type="match status" value="1"/>
</dbReference>
<dbReference type="FunFam" id="1.10.220.10:FF:000003">
    <property type="entry name" value="Annexin"/>
    <property type="match status" value="1"/>
</dbReference>
<dbReference type="FunFam" id="1.10.220.10:FF:000012">
    <property type="entry name" value="Annexin A10"/>
    <property type="match status" value="1"/>
</dbReference>
<dbReference type="FunFam" id="1.10.220.10:FF:000020">
    <property type="entry name" value="Annexin A10"/>
    <property type="match status" value="1"/>
</dbReference>
<dbReference type="Gene3D" id="1.10.220.10">
    <property type="entry name" value="Annexin"/>
    <property type="match status" value="4"/>
</dbReference>
<dbReference type="InterPro" id="IPR001464">
    <property type="entry name" value="Annexin"/>
</dbReference>
<dbReference type="InterPro" id="IPR018502">
    <property type="entry name" value="Annexin_repeat"/>
</dbReference>
<dbReference type="InterPro" id="IPR018252">
    <property type="entry name" value="Annexin_repeat_CS"/>
</dbReference>
<dbReference type="InterPro" id="IPR037104">
    <property type="entry name" value="Annexin_sf"/>
</dbReference>
<dbReference type="InterPro" id="IPR008156">
    <property type="entry name" value="ANX10"/>
</dbReference>
<dbReference type="PANTHER" id="PTHR10502">
    <property type="entry name" value="ANNEXIN"/>
    <property type="match status" value="1"/>
</dbReference>
<dbReference type="PANTHER" id="PTHR10502:SF100">
    <property type="entry name" value="ANNEXIN A10"/>
    <property type="match status" value="1"/>
</dbReference>
<dbReference type="Pfam" id="PF00191">
    <property type="entry name" value="Annexin"/>
    <property type="match status" value="4"/>
</dbReference>
<dbReference type="PRINTS" id="PR00196">
    <property type="entry name" value="ANNEXIN"/>
</dbReference>
<dbReference type="PRINTS" id="PR01809">
    <property type="entry name" value="ANNEXINX"/>
</dbReference>
<dbReference type="SMART" id="SM00335">
    <property type="entry name" value="ANX"/>
    <property type="match status" value="4"/>
</dbReference>
<dbReference type="SUPFAM" id="SSF47874">
    <property type="entry name" value="Annexin"/>
    <property type="match status" value="1"/>
</dbReference>
<dbReference type="PROSITE" id="PS00223">
    <property type="entry name" value="ANNEXIN_1"/>
    <property type="match status" value="1"/>
</dbReference>
<dbReference type="PROSITE" id="PS51897">
    <property type="entry name" value="ANNEXIN_2"/>
    <property type="match status" value="4"/>
</dbReference>
<keyword id="KW-0041">Annexin</keyword>
<keyword id="KW-1185">Reference proteome</keyword>
<keyword id="KW-0677">Repeat</keyword>
<organism>
    <name type="scientific">Mus musculus</name>
    <name type="common">Mouse</name>
    <dbReference type="NCBI Taxonomy" id="10090"/>
    <lineage>
        <taxon>Eukaryota</taxon>
        <taxon>Metazoa</taxon>
        <taxon>Chordata</taxon>
        <taxon>Craniata</taxon>
        <taxon>Vertebrata</taxon>
        <taxon>Euteleostomi</taxon>
        <taxon>Mammalia</taxon>
        <taxon>Eutheria</taxon>
        <taxon>Euarchontoglires</taxon>
        <taxon>Glires</taxon>
        <taxon>Rodentia</taxon>
        <taxon>Myomorpha</taxon>
        <taxon>Muroidea</taxon>
        <taxon>Muridae</taxon>
        <taxon>Murinae</taxon>
        <taxon>Mus</taxon>
        <taxon>Mus</taxon>
    </lineage>
</organism>
<accession>Q9QZ10</accession>
<accession>Q3TGJ1</accession>
<feature type="chain" id="PRO_0000067508" description="Annexin A10">
    <location>
        <begin position="1"/>
        <end position="324"/>
    </location>
</feature>
<feature type="repeat" description="Annexin 1" evidence="1">
    <location>
        <begin position="17"/>
        <end position="88"/>
    </location>
</feature>
<feature type="repeat" description="Annexin 2" evidence="1">
    <location>
        <begin position="89"/>
        <end position="160"/>
    </location>
</feature>
<feature type="repeat" description="Annexin 3" evidence="1">
    <location>
        <begin position="171"/>
        <end position="243"/>
    </location>
</feature>
<feature type="repeat" description="Annexin 4" evidence="1">
    <location>
        <begin position="247"/>
        <end position="318"/>
    </location>
</feature>
<feature type="sequence conflict" description="In Ref. 1; CAB51927." evidence="2" ref="1">
    <original>A</original>
    <variation>R</variation>
    <location>
        <position position="29"/>
    </location>
</feature>
<feature type="sequence conflict" description="In Ref. 1; CAB51927." evidence="2" ref="1">
    <original>W</original>
    <variation>R</variation>
    <location>
        <position position="208"/>
    </location>
</feature>
<feature type="sequence conflict" description="In Ref. 1; CAB51927." evidence="2" ref="1">
    <original>L</original>
    <variation>M</variation>
    <location>
        <position position="222"/>
    </location>
</feature>
<feature type="sequence conflict" description="In Ref. 1; CAB51927." evidence="2" ref="1">
    <original>Y</original>
    <variation>T</variation>
    <location>
        <position position="230"/>
    </location>
</feature>